<accession>B4J913</accession>
<proteinExistence type="inferred from homology"/>
<sequence>MSGRDNRAAGAGGGSGGGGGGGGGGGNHHHHHQPLSNAMGKLKEKLTRAGEELGYHRVESNLSASNTATSLDTILPEDPFPFPQAAPQRHPQQQFPFLQQQPQQQQQPQQQQQPQQQQQLQQHHTQHTQYQQQQQQQQPLRLLHDIDDEQPLSFRPLLEDDDIHEPPQEIQQQQLQQQRGNLRASGSLELTPLPPPPTSLEPHRDRQQRSVVNEELQRSKQSLKGSRVSFERAPQQSNSNNNSKNNSKTTVAADASDDDSFEDRRVGYQQQKATSVDHKGILKDLRHILASDNRRQFQAKKHVSLDIKGTPFLQDLLKDSSSEEEFHKTRREFQGRKHQSLDPRVTFKLDKVLHGSSTDSDEEGEDAEHKRLIHRPKDITKPVIIDLKDLESESDEDFLSSRQNFQQQRSISTDSRKSRRLYEMDEMGNKRGENIRHAVPFVRQITEDGKPKLEVYRPTTNPIYIWTQVLAALSVSLGSLVVGFSSAYTSPALVSMTDRNLTSFDVSTEDASWVGGIMPLAGLAGGIAGGPLIEYLGRRNTILATAVPFIISWLLIACAVNVPMVLSGRFLAGFCVGIASLSLPVYLGETVQPEVRGTLGLLPTAFGNIGILLCFIAGTYMDWSMLAFLGGALPVPFLILMFLIPETPRWYVSRGREERARKALVWLRGVEADVEPELKGLMRSQADADRQATHNTMLELLKRSNLKPLSISLGLMFFQQLSGINAVIFYTVQIFKDAGSTLDGNVCTIIVGTVNFIATFIGILLIDRAGRKILLYVSNIAMILTLFVLGGFFYCKANGMDVSNVGLLPLCCFVVYILGFSLGFGPIPWLMMGEILPAKIRGSAASVATAFNWTCTFVVTKSFLDMIKLIGAHGAFWLFGVICCIGMFFVIFCVPETQGKTLEDIERKMMGRVRRMSSVANIKPLSFNM</sequence>
<comment type="function">
    <text evidence="1">Low-capacity facilitative transporter for trehalose. Does not transport maltose, sucrose or lactose. Mediates the bidirectional transfer of trehalose. Responsible for the transport of trehalose synthesized in the fat body and the incorporation of trehalose into other tissues that require a carbon source, thereby regulating trehalose levels in the hemolymph (By similarity).</text>
</comment>
<comment type="subcellular location">
    <subcellularLocation>
        <location evidence="1">Cell membrane</location>
        <topology evidence="1">Multi-pass membrane protein</topology>
    </subcellularLocation>
</comment>
<comment type="similarity">
    <text evidence="1 2">Belongs to the major facilitator superfamily. Sugar transporter (TC 2.A.1.1) family. Trehalose transporter subfamily.</text>
</comment>
<keyword id="KW-1003">Cell membrane</keyword>
<keyword id="KW-0325">Glycoprotein</keyword>
<keyword id="KW-0472">Membrane</keyword>
<keyword id="KW-0597">Phosphoprotein</keyword>
<keyword id="KW-1185">Reference proteome</keyword>
<keyword id="KW-0762">Sugar transport</keyword>
<keyword id="KW-0812">Transmembrane</keyword>
<keyword id="KW-1133">Transmembrane helix</keyword>
<keyword id="KW-0813">Transport</keyword>
<feature type="chain" id="PRO_0000395544" description="Facilitated trehalose transporter Tret1">
    <location>
        <begin position="1"/>
        <end position="929"/>
    </location>
</feature>
<feature type="topological domain" description="Cytoplasmic" evidence="2">
    <location>
        <begin position="1"/>
        <end position="462"/>
    </location>
</feature>
<feature type="transmembrane region" description="Helical; Name=1" evidence="2">
    <location>
        <begin position="463"/>
        <end position="483"/>
    </location>
</feature>
<feature type="topological domain" description="Extracellular" evidence="2">
    <location>
        <begin position="484"/>
        <end position="512"/>
    </location>
</feature>
<feature type="transmembrane region" description="Helical; Name=2" evidence="2">
    <location>
        <begin position="513"/>
        <end position="533"/>
    </location>
</feature>
<feature type="topological domain" description="Cytoplasmic" evidence="2">
    <location>
        <begin position="534"/>
        <end position="541"/>
    </location>
</feature>
<feature type="transmembrane region" description="Helical; Name=3" evidence="2">
    <location>
        <begin position="542"/>
        <end position="562"/>
    </location>
</feature>
<feature type="topological domain" description="Extracellular" evidence="2">
    <location>
        <begin position="563"/>
        <end position="569"/>
    </location>
</feature>
<feature type="transmembrane region" description="Helical; Name=4" evidence="2">
    <location>
        <begin position="570"/>
        <end position="590"/>
    </location>
</feature>
<feature type="topological domain" description="Cytoplasmic" evidence="2">
    <location>
        <begin position="591"/>
        <end position="596"/>
    </location>
</feature>
<feature type="transmembrane region" description="Helical; Name=5" evidence="2">
    <location>
        <begin position="597"/>
        <end position="617"/>
    </location>
</feature>
<feature type="topological domain" description="Extracellular" evidence="2">
    <location>
        <begin position="618"/>
        <end position="624"/>
    </location>
</feature>
<feature type="transmembrane region" description="Helical; Name=6" evidence="2">
    <location>
        <begin position="625"/>
        <end position="645"/>
    </location>
</feature>
<feature type="topological domain" description="Cytoplasmic" evidence="2">
    <location>
        <begin position="646"/>
        <end position="708"/>
    </location>
</feature>
<feature type="transmembrane region" description="Helical; Name=7" evidence="2">
    <location>
        <begin position="709"/>
        <end position="729"/>
    </location>
</feature>
<feature type="topological domain" description="Extracellular" evidence="2">
    <location>
        <begin position="730"/>
        <end position="745"/>
    </location>
</feature>
<feature type="transmembrane region" description="Helical; Name=8" evidence="2">
    <location>
        <begin position="746"/>
        <end position="766"/>
    </location>
</feature>
<feature type="topological domain" description="Cytoplasmic" evidence="2">
    <location>
        <begin position="767"/>
        <end position="772"/>
    </location>
</feature>
<feature type="transmembrane region" description="Helical; Name=9" evidence="2">
    <location>
        <begin position="773"/>
        <end position="793"/>
    </location>
</feature>
<feature type="topological domain" description="Extracellular" evidence="2">
    <location>
        <begin position="794"/>
        <end position="804"/>
    </location>
</feature>
<feature type="transmembrane region" description="Helical; Name=10" evidence="2">
    <location>
        <begin position="805"/>
        <end position="825"/>
    </location>
</feature>
<feature type="topological domain" description="Cytoplasmic" evidence="2">
    <location>
        <begin position="826"/>
        <end position="839"/>
    </location>
</feature>
<feature type="transmembrane region" description="Helical; Name=11" evidence="2">
    <location>
        <begin position="840"/>
        <end position="860"/>
    </location>
</feature>
<feature type="topological domain" description="Extracellular" evidence="2">
    <location>
        <begin position="861"/>
        <end position="873"/>
    </location>
</feature>
<feature type="transmembrane region" description="Helical; Name=12" evidence="2">
    <location>
        <begin position="874"/>
        <end position="894"/>
    </location>
</feature>
<feature type="topological domain" description="Cytoplasmic" evidence="2">
    <location>
        <begin position="895"/>
        <end position="929"/>
    </location>
</feature>
<feature type="region of interest" description="Disordered" evidence="3">
    <location>
        <begin position="1"/>
        <end position="275"/>
    </location>
</feature>
<feature type="region of interest" description="Disordered" evidence="3">
    <location>
        <begin position="352"/>
        <end position="371"/>
    </location>
</feature>
<feature type="region of interest" description="Disordered" evidence="3">
    <location>
        <begin position="398"/>
        <end position="420"/>
    </location>
</feature>
<feature type="compositionally biased region" description="Gly residues" evidence="3">
    <location>
        <begin position="10"/>
        <end position="26"/>
    </location>
</feature>
<feature type="compositionally biased region" description="Basic and acidic residues" evidence="3">
    <location>
        <begin position="41"/>
        <end position="59"/>
    </location>
</feature>
<feature type="compositionally biased region" description="Polar residues" evidence="3">
    <location>
        <begin position="60"/>
        <end position="72"/>
    </location>
</feature>
<feature type="compositionally biased region" description="Low complexity" evidence="3">
    <location>
        <begin position="85"/>
        <end position="141"/>
    </location>
</feature>
<feature type="compositionally biased region" description="Low complexity" evidence="3">
    <location>
        <begin position="168"/>
        <end position="178"/>
    </location>
</feature>
<feature type="compositionally biased region" description="Low complexity" evidence="3">
    <location>
        <begin position="237"/>
        <end position="254"/>
    </location>
</feature>
<feature type="compositionally biased region" description="Polar residues" evidence="3">
    <location>
        <begin position="402"/>
        <end position="413"/>
    </location>
</feature>
<feature type="modified residue" description="Phosphoserine" evidence="1">
    <location>
        <position position="320"/>
    </location>
</feature>
<feature type="modified residue" description="Phosphoserine" evidence="1">
    <location>
        <position position="321"/>
    </location>
</feature>
<feature type="modified residue" description="Phosphoserine" evidence="1">
    <location>
        <position position="322"/>
    </location>
</feature>
<feature type="modified residue" description="Phosphoserine" evidence="1">
    <location>
        <position position="392"/>
    </location>
</feature>
<feature type="modified residue" description="Phosphoserine" evidence="1">
    <location>
        <position position="394"/>
    </location>
</feature>
<feature type="modified residue" description="Phosphoserine" evidence="1">
    <location>
        <position position="917"/>
    </location>
</feature>
<feature type="modified residue" description="Phosphoserine" evidence="1">
    <location>
        <position position="918"/>
    </location>
</feature>
<feature type="glycosylation site" description="N-linked (GlcNAc...) asparagine" evidence="2">
    <location>
        <position position="500"/>
    </location>
</feature>
<gene>
    <name evidence="1" type="primary">Tret1</name>
    <name type="ORF">GH21392</name>
</gene>
<protein>
    <recommendedName>
        <fullName evidence="1">Facilitated trehalose transporter Tret1</fullName>
    </recommendedName>
</protein>
<dbReference type="EMBL" id="CH916367">
    <property type="protein sequence ID" value="EDW01362.1"/>
    <property type="molecule type" value="Genomic_DNA"/>
</dbReference>
<dbReference type="SMR" id="B4J913"/>
<dbReference type="FunCoup" id="B4J913">
    <property type="interactions" value="167"/>
</dbReference>
<dbReference type="STRING" id="7222.B4J913"/>
<dbReference type="GlyCosmos" id="B4J913">
    <property type="glycosylation" value="1 site, No reported glycans"/>
</dbReference>
<dbReference type="EnsemblMetazoa" id="FBtr0465561">
    <property type="protein sequence ID" value="FBpp0415803"/>
    <property type="gene ID" value="FBgn0128854"/>
</dbReference>
<dbReference type="EnsemblMetazoa" id="XM_001986459.3">
    <property type="protein sequence ID" value="XP_001986495.1"/>
    <property type="gene ID" value="LOC6559185"/>
</dbReference>
<dbReference type="GeneID" id="6559185"/>
<dbReference type="KEGG" id="dgr:6559185"/>
<dbReference type="CTD" id="36248"/>
<dbReference type="eggNOG" id="KOG0254">
    <property type="taxonomic scope" value="Eukaryota"/>
</dbReference>
<dbReference type="HOGENOM" id="CLU_016710_0_0_1"/>
<dbReference type="InParanoid" id="B4J913"/>
<dbReference type="OMA" id="IFIWTQS"/>
<dbReference type="OrthoDB" id="6339427at2759"/>
<dbReference type="PhylomeDB" id="B4J913"/>
<dbReference type="Proteomes" id="UP000001070">
    <property type="component" value="Unassembled WGS sequence"/>
</dbReference>
<dbReference type="GO" id="GO:0005886">
    <property type="term" value="C:plasma membrane"/>
    <property type="evidence" value="ECO:0000250"/>
    <property type="project" value="UniProtKB"/>
</dbReference>
<dbReference type="GO" id="GO:0051119">
    <property type="term" value="F:sugar transmembrane transporter activity"/>
    <property type="evidence" value="ECO:0007669"/>
    <property type="project" value="InterPro"/>
</dbReference>
<dbReference type="GO" id="GO:0015574">
    <property type="term" value="F:trehalose transmembrane transporter activity"/>
    <property type="evidence" value="ECO:0000250"/>
    <property type="project" value="UniProtKB"/>
</dbReference>
<dbReference type="GO" id="GO:0015771">
    <property type="term" value="P:trehalose transport"/>
    <property type="evidence" value="ECO:0000250"/>
    <property type="project" value="UniProtKB"/>
</dbReference>
<dbReference type="CDD" id="cd17358">
    <property type="entry name" value="MFS_GLUT6_8_Class3_like"/>
    <property type="match status" value="1"/>
</dbReference>
<dbReference type="FunFam" id="1.20.1250.20:FF:000055">
    <property type="entry name" value="Facilitated trehalose transporter Tret1-2 homolog"/>
    <property type="match status" value="1"/>
</dbReference>
<dbReference type="Gene3D" id="1.20.1250.20">
    <property type="entry name" value="MFS general substrate transporter like domains"/>
    <property type="match status" value="1"/>
</dbReference>
<dbReference type="InterPro" id="IPR020846">
    <property type="entry name" value="MFS_dom"/>
</dbReference>
<dbReference type="InterPro" id="IPR044775">
    <property type="entry name" value="MFS_ERD6/Tret1-like"/>
</dbReference>
<dbReference type="InterPro" id="IPR005828">
    <property type="entry name" value="MFS_sugar_transport-like"/>
</dbReference>
<dbReference type="InterPro" id="IPR036259">
    <property type="entry name" value="MFS_trans_sf"/>
</dbReference>
<dbReference type="InterPro" id="IPR050549">
    <property type="entry name" value="MFS_Trehalose_Transporter"/>
</dbReference>
<dbReference type="InterPro" id="IPR003663">
    <property type="entry name" value="Sugar/inositol_transpt"/>
</dbReference>
<dbReference type="InterPro" id="IPR005829">
    <property type="entry name" value="Sugar_transporter_CS"/>
</dbReference>
<dbReference type="NCBIfam" id="TIGR00879">
    <property type="entry name" value="SP"/>
    <property type="match status" value="1"/>
</dbReference>
<dbReference type="PANTHER" id="PTHR48021">
    <property type="match status" value="1"/>
</dbReference>
<dbReference type="PANTHER" id="PTHR48021:SF96">
    <property type="entry name" value="FACILITATED TREHALOSE TRANSPORTER TRET1-1-RELATED"/>
    <property type="match status" value="1"/>
</dbReference>
<dbReference type="Pfam" id="PF00083">
    <property type="entry name" value="Sugar_tr"/>
    <property type="match status" value="1"/>
</dbReference>
<dbReference type="PRINTS" id="PR00171">
    <property type="entry name" value="SUGRTRNSPORT"/>
</dbReference>
<dbReference type="SUPFAM" id="SSF103473">
    <property type="entry name" value="MFS general substrate transporter"/>
    <property type="match status" value="1"/>
</dbReference>
<dbReference type="PROSITE" id="PS50850">
    <property type="entry name" value="MFS"/>
    <property type="match status" value="1"/>
</dbReference>
<dbReference type="PROSITE" id="PS00216">
    <property type="entry name" value="SUGAR_TRANSPORT_1"/>
    <property type="match status" value="2"/>
</dbReference>
<dbReference type="PROSITE" id="PS00217">
    <property type="entry name" value="SUGAR_TRANSPORT_2"/>
    <property type="match status" value="1"/>
</dbReference>
<reference evidence="4" key="1">
    <citation type="journal article" date="2007" name="Nature">
        <title>Evolution of genes and genomes on the Drosophila phylogeny.</title>
        <authorList>
            <consortium name="Drosophila 12 genomes consortium"/>
        </authorList>
    </citation>
    <scope>NUCLEOTIDE SEQUENCE [LARGE SCALE GENOMIC DNA]</scope>
    <source>
        <strain evidence="4">Tucson 15287-2541.00</strain>
    </source>
</reference>
<organism>
    <name type="scientific">Drosophila grimshawi</name>
    <name type="common">Hawaiian fruit fly</name>
    <name type="synonym">Idiomyia grimshawi</name>
    <dbReference type="NCBI Taxonomy" id="7222"/>
    <lineage>
        <taxon>Eukaryota</taxon>
        <taxon>Metazoa</taxon>
        <taxon>Ecdysozoa</taxon>
        <taxon>Arthropoda</taxon>
        <taxon>Hexapoda</taxon>
        <taxon>Insecta</taxon>
        <taxon>Pterygota</taxon>
        <taxon>Neoptera</taxon>
        <taxon>Endopterygota</taxon>
        <taxon>Diptera</taxon>
        <taxon>Brachycera</taxon>
        <taxon>Muscomorpha</taxon>
        <taxon>Ephydroidea</taxon>
        <taxon>Drosophilidae</taxon>
        <taxon>Drosophila</taxon>
        <taxon>Hawaiian Drosophila</taxon>
    </lineage>
</organism>
<evidence type="ECO:0000250" key="1">
    <source>
        <dbReference type="UniProtKB" id="A1Z8N1"/>
    </source>
</evidence>
<evidence type="ECO:0000255" key="2"/>
<evidence type="ECO:0000256" key="3">
    <source>
        <dbReference type="SAM" id="MobiDB-lite"/>
    </source>
</evidence>
<evidence type="ECO:0000312" key="4">
    <source>
        <dbReference type="EMBL" id="EDW01362.1"/>
    </source>
</evidence>
<name>TRET1_DROGR</name>